<evidence type="ECO:0000255" key="1">
    <source>
        <dbReference type="HAMAP-Rule" id="MF_00397"/>
    </source>
</evidence>
<proteinExistence type="inferred from homology"/>
<protein>
    <recommendedName>
        <fullName evidence="1">Probable 2-(5''-triphosphoribosyl)-3'-dephosphocoenzyme-A synthase</fullName>
        <shortName evidence="1">2-(5''-triphosphoribosyl)-3'-dephospho-CoA synthase</shortName>
        <ecNumber evidence="1">2.4.2.52</ecNumber>
    </recommendedName>
</protein>
<dbReference type="EC" id="2.4.2.52" evidence="1"/>
<dbReference type="EMBL" id="AM933173">
    <property type="protein sequence ID" value="CAR35974.1"/>
    <property type="molecule type" value="Genomic_DNA"/>
</dbReference>
<dbReference type="RefSeq" id="WP_001103236.1">
    <property type="nucleotide sequence ID" value="NC_011274.1"/>
</dbReference>
<dbReference type="KEGG" id="seg:SG0067"/>
<dbReference type="HOGENOM" id="CLU_056179_1_0_6"/>
<dbReference type="Proteomes" id="UP000008321">
    <property type="component" value="Chromosome"/>
</dbReference>
<dbReference type="GO" id="GO:0005524">
    <property type="term" value="F:ATP binding"/>
    <property type="evidence" value="ECO:0007669"/>
    <property type="project" value="UniProtKB-KW"/>
</dbReference>
<dbReference type="GO" id="GO:0046917">
    <property type="term" value="F:triphosphoribosyl-dephospho-CoA synthase activity"/>
    <property type="evidence" value="ECO:0007669"/>
    <property type="project" value="UniProtKB-UniRule"/>
</dbReference>
<dbReference type="GO" id="GO:0051191">
    <property type="term" value="P:prosthetic group biosynthetic process"/>
    <property type="evidence" value="ECO:0007669"/>
    <property type="project" value="TreeGrafter"/>
</dbReference>
<dbReference type="FunFam" id="1.10.4200.10:FF:000001">
    <property type="entry name" value="Triphosphoribosyl-dephospho-CoA synthase CitG"/>
    <property type="match status" value="1"/>
</dbReference>
<dbReference type="Gene3D" id="1.10.4200.10">
    <property type="entry name" value="Triphosphoribosyl-dephospho-CoA protein"/>
    <property type="match status" value="1"/>
</dbReference>
<dbReference type="HAMAP" id="MF_00397">
    <property type="entry name" value="CitG"/>
    <property type="match status" value="1"/>
</dbReference>
<dbReference type="InterPro" id="IPR002736">
    <property type="entry name" value="CitG"/>
</dbReference>
<dbReference type="InterPro" id="IPR017551">
    <property type="entry name" value="TriPribosyl-deP-CoA_syn_CitG"/>
</dbReference>
<dbReference type="NCBIfam" id="TIGR03125">
    <property type="entry name" value="citrate_citG"/>
    <property type="match status" value="1"/>
</dbReference>
<dbReference type="PANTHER" id="PTHR30201:SF2">
    <property type="entry name" value="2-(5''-TRIPHOSPHORIBOSYL)-3'-DEPHOSPHOCOENZYME-A SYNTHASE"/>
    <property type="match status" value="1"/>
</dbReference>
<dbReference type="PANTHER" id="PTHR30201">
    <property type="entry name" value="TRIPHOSPHORIBOSYL-DEPHOSPHO-COA SYNTHASE"/>
    <property type="match status" value="1"/>
</dbReference>
<dbReference type="Pfam" id="PF01874">
    <property type="entry name" value="CitG"/>
    <property type="match status" value="1"/>
</dbReference>
<feature type="chain" id="PRO_1000189592" description="Probable 2-(5''-triphosphoribosyl)-3'-dephosphocoenzyme-A synthase">
    <location>
        <begin position="1"/>
        <end position="302"/>
    </location>
</feature>
<comment type="catalytic activity">
    <reaction evidence="1">
        <text>3'-dephospho-CoA + ATP = 2'-(5''-triphospho-alpha-D-ribosyl)-3'-dephospho-CoA + adenine</text>
        <dbReference type="Rhea" id="RHEA:15117"/>
        <dbReference type="ChEBI" id="CHEBI:16708"/>
        <dbReference type="ChEBI" id="CHEBI:30616"/>
        <dbReference type="ChEBI" id="CHEBI:57328"/>
        <dbReference type="ChEBI" id="CHEBI:61378"/>
        <dbReference type="EC" id="2.4.2.52"/>
    </reaction>
</comment>
<comment type="similarity">
    <text evidence="1">Belongs to the CitG/MdcB family.</text>
</comment>
<accession>B5RG98</accession>
<organism>
    <name type="scientific">Salmonella gallinarum (strain 287/91 / NCTC 13346)</name>
    <dbReference type="NCBI Taxonomy" id="550538"/>
    <lineage>
        <taxon>Bacteria</taxon>
        <taxon>Pseudomonadati</taxon>
        <taxon>Pseudomonadota</taxon>
        <taxon>Gammaproteobacteria</taxon>
        <taxon>Enterobacterales</taxon>
        <taxon>Enterobacteriaceae</taxon>
        <taxon>Salmonella</taxon>
    </lineage>
</organism>
<sequence>MNVSVVTERRTPAYSSLAAGELNGLVARALLTEARLTPKPGLVDIRNSGAHRDMDLAAFERSTTAIAPWMEKFFIMGNNTAALAAENVLVMLRPLGMACENDMLQATNGVNTHRGAIFAFGLLSAAIGRLIARGEPLEQNRICDQVARLSRNIVAHELSAKKAGKLTKSETHFQCYGLSGARGEAESGFRTVRTQALPVFNRVVQEHDDTHLALLQTLLHLMAWNDDTNLVSRGGLEGLYYVQQQAQKLLWQGGVLVEGGIEAMQSLDDELILRNLSPGGSADLLAVTWFLSHFPAGSLYPE</sequence>
<name>CITG_SALG2</name>
<reference key="1">
    <citation type="journal article" date="2008" name="Genome Res.">
        <title>Comparative genome analysis of Salmonella enteritidis PT4 and Salmonella gallinarum 287/91 provides insights into evolutionary and host adaptation pathways.</title>
        <authorList>
            <person name="Thomson N.R."/>
            <person name="Clayton D.J."/>
            <person name="Windhorst D."/>
            <person name="Vernikos G."/>
            <person name="Davidson S."/>
            <person name="Churcher C."/>
            <person name="Quail M.A."/>
            <person name="Stevens M."/>
            <person name="Jones M.A."/>
            <person name="Watson M."/>
            <person name="Barron A."/>
            <person name="Layton A."/>
            <person name="Pickard D."/>
            <person name="Kingsley R.A."/>
            <person name="Bignell A."/>
            <person name="Clark L."/>
            <person name="Harris B."/>
            <person name="Ormond D."/>
            <person name="Abdellah Z."/>
            <person name="Brooks K."/>
            <person name="Cherevach I."/>
            <person name="Chillingworth T."/>
            <person name="Woodward J."/>
            <person name="Norberczak H."/>
            <person name="Lord A."/>
            <person name="Arrowsmith C."/>
            <person name="Jagels K."/>
            <person name="Moule S."/>
            <person name="Mungall K."/>
            <person name="Saunders M."/>
            <person name="Whitehead S."/>
            <person name="Chabalgoity J.A."/>
            <person name="Maskell D."/>
            <person name="Humphreys T."/>
            <person name="Roberts M."/>
            <person name="Barrow P.A."/>
            <person name="Dougan G."/>
            <person name="Parkhill J."/>
        </authorList>
    </citation>
    <scope>NUCLEOTIDE SEQUENCE [LARGE SCALE GENOMIC DNA]</scope>
    <source>
        <strain>287/91 / NCTC 13346</strain>
    </source>
</reference>
<gene>
    <name evidence="1" type="primary">citG</name>
    <name type="ordered locus">SG0067</name>
</gene>
<keyword id="KW-0067">ATP-binding</keyword>
<keyword id="KW-0547">Nucleotide-binding</keyword>
<keyword id="KW-0808">Transferase</keyword>